<dbReference type="EMBL" id="U09584">
    <property type="protein sequence ID" value="AAA92281.1"/>
    <property type="molecule type" value="mRNA"/>
</dbReference>
<dbReference type="EMBL" id="CR457020">
    <property type="protein sequence ID" value="CAG33301.1"/>
    <property type="molecule type" value="mRNA"/>
</dbReference>
<dbReference type="EMBL" id="AC002481">
    <property type="protein sequence ID" value="AAB67308.1"/>
    <property type="status" value="ALT_SEQ"/>
    <property type="molecule type" value="Genomic_DNA"/>
</dbReference>
<dbReference type="EMBL" id="Z84492">
    <property type="status" value="NOT_ANNOTATED_CDS"/>
    <property type="molecule type" value="Genomic_DNA"/>
</dbReference>
<dbReference type="EMBL" id="CH471055">
    <property type="protein sequence ID" value="EAW65115.1"/>
    <property type="molecule type" value="Genomic_DNA"/>
</dbReference>
<dbReference type="EMBL" id="BC011948">
    <property type="protein sequence ID" value="AAH11948.1"/>
    <property type="molecule type" value="mRNA"/>
</dbReference>
<dbReference type="EMBL" id="BC017367">
    <property type="protein sequence ID" value="AAH17367.1"/>
    <property type="molecule type" value="mRNA"/>
</dbReference>
<dbReference type="CCDS" id="CCDS2828.1"/>
<dbReference type="PIR" id="G01430">
    <property type="entry name" value="G01430"/>
</dbReference>
<dbReference type="RefSeq" id="NP_008955.1">
    <property type="nucleotide sequence ID" value="NM_007024.5"/>
</dbReference>
<dbReference type="BioGRID" id="116254">
    <property type="interactions" value="59"/>
</dbReference>
<dbReference type="FunCoup" id="Q12893">
    <property type="interactions" value="2253"/>
</dbReference>
<dbReference type="IntAct" id="Q12893">
    <property type="interactions" value="29"/>
</dbReference>
<dbReference type="MINT" id="Q12893"/>
<dbReference type="STRING" id="9606.ENSP00000266025"/>
<dbReference type="GlyGen" id="Q12893">
    <property type="glycosylation" value="2 sites"/>
</dbReference>
<dbReference type="iPTMnet" id="Q12893"/>
<dbReference type="PhosphoSitePlus" id="Q12893"/>
<dbReference type="SwissPalm" id="Q12893"/>
<dbReference type="BioMuta" id="TMEM115"/>
<dbReference type="DMDM" id="24638130"/>
<dbReference type="jPOST" id="Q12893"/>
<dbReference type="MassIVE" id="Q12893"/>
<dbReference type="PaxDb" id="9606-ENSP00000266025"/>
<dbReference type="PeptideAtlas" id="Q12893"/>
<dbReference type="ProteomicsDB" id="59007"/>
<dbReference type="Pumba" id="Q12893"/>
<dbReference type="Antibodypedia" id="3346">
    <property type="antibodies" value="108 antibodies from 19 providers"/>
</dbReference>
<dbReference type="DNASU" id="11070"/>
<dbReference type="Ensembl" id="ENST00000266025.4">
    <property type="protein sequence ID" value="ENSP00000266025.3"/>
    <property type="gene ID" value="ENSG00000126062.4"/>
</dbReference>
<dbReference type="GeneID" id="11070"/>
<dbReference type="KEGG" id="hsa:11070"/>
<dbReference type="MANE-Select" id="ENST00000266025.4">
    <property type="protein sequence ID" value="ENSP00000266025.3"/>
    <property type="RefSeq nucleotide sequence ID" value="NM_007024.5"/>
    <property type="RefSeq protein sequence ID" value="NP_008955.1"/>
</dbReference>
<dbReference type="UCSC" id="uc003dan.2">
    <property type="organism name" value="human"/>
</dbReference>
<dbReference type="AGR" id="HGNC:30055"/>
<dbReference type="CTD" id="11070"/>
<dbReference type="DisGeNET" id="11070"/>
<dbReference type="GeneCards" id="TMEM115"/>
<dbReference type="HGNC" id="HGNC:30055">
    <property type="gene designation" value="TMEM115"/>
</dbReference>
<dbReference type="HPA" id="ENSG00000126062">
    <property type="expression patterns" value="Low tissue specificity"/>
</dbReference>
<dbReference type="MIM" id="607069">
    <property type="type" value="gene"/>
</dbReference>
<dbReference type="neXtProt" id="NX_Q12893"/>
<dbReference type="OpenTargets" id="ENSG00000126062"/>
<dbReference type="PharmGKB" id="PA143485636"/>
<dbReference type="VEuPathDB" id="HostDB:ENSG00000126062"/>
<dbReference type="eggNOG" id="KOG2890">
    <property type="taxonomic scope" value="Eukaryota"/>
</dbReference>
<dbReference type="GeneTree" id="ENSGT00390000002470"/>
<dbReference type="HOGENOM" id="CLU_043563_2_0_1"/>
<dbReference type="InParanoid" id="Q12893"/>
<dbReference type="OMA" id="EIHFWEV"/>
<dbReference type="OrthoDB" id="73612at2759"/>
<dbReference type="PAN-GO" id="Q12893">
    <property type="GO annotations" value="2 GO annotations based on evolutionary models"/>
</dbReference>
<dbReference type="PhylomeDB" id="Q12893"/>
<dbReference type="TreeFam" id="TF315100"/>
<dbReference type="PathwayCommons" id="Q12893"/>
<dbReference type="Reactome" id="R-HSA-6807878">
    <property type="pathway name" value="COPI-mediated anterograde transport"/>
</dbReference>
<dbReference type="SignaLink" id="Q12893"/>
<dbReference type="BioGRID-ORCS" id="11070">
    <property type="hits" value="18 hits in 1162 CRISPR screens"/>
</dbReference>
<dbReference type="GenomeRNAi" id="11070"/>
<dbReference type="Pharos" id="Q12893">
    <property type="development level" value="Tbio"/>
</dbReference>
<dbReference type="PRO" id="PR:Q12893"/>
<dbReference type="Proteomes" id="UP000005640">
    <property type="component" value="Chromosome 3"/>
</dbReference>
<dbReference type="RNAct" id="Q12893">
    <property type="molecule type" value="protein"/>
</dbReference>
<dbReference type="Bgee" id="ENSG00000126062">
    <property type="expression patterns" value="Expressed in stromal cell of endometrium and 196 other cell types or tissues"/>
</dbReference>
<dbReference type="ExpressionAtlas" id="Q12893">
    <property type="expression patterns" value="baseline and differential"/>
</dbReference>
<dbReference type="GO" id="GO:0005794">
    <property type="term" value="C:Golgi apparatus"/>
    <property type="evidence" value="ECO:0000314"/>
    <property type="project" value="UniProtKB"/>
</dbReference>
<dbReference type="GO" id="GO:0032580">
    <property type="term" value="C:Golgi cisterna membrane"/>
    <property type="evidence" value="ECO:0000314"/>
    <property type="project" value="UniProtKB"/>
</dbReference>
<dbReference type="GO" id="GO:0000139">
    <property type="term" value="C:Golgi membrane"/>
    <property type="evidence" value="ECO:0000304"/>
    <property type="project" value="Reactome"/>
</dbReference>
<dbReference type="GO" id="GO:0005634">
    <property type="term" value="C:nucleus"/>
    <property type="evidence" value="ECO:0000314"/>
    <property type="project" value="UniProtKB"/>
</dbReference>
<dbReference type="GO" id="GO:0042802">
    <property type="term" value="F:identical protein binding"/>
    <property type="evidence" value="ECO:0000314"/>
    <property type="project" value="UniProtKB"/>
</dbReference>
<dbReference type="GO" id="GO:0008285">
    <property type="term" value="P:negative regulation of cell population proliferation"/>
    <property type="evidence" value="ECO:0000303"/>
    <property type="project" value="UniProtKB"/>
</dbReference>
<dbReference type="GO" id="GO:0015031">
    <property type="term" value="P:protein transport"/>
    <property type="evidence" value="ECO:0007669"/>
    <property type="project" value="UniProtKB-KW"/>
</dbReference>
<dbReference type="GO" id="GO:0006890">
    <property type="term" value="P:retrograde vesicle-mediated transport, Golgi to endoplasmic reticulum"/>
    <property type="evidence" value="ECO:0000315"/>
    <property type="project" value="UniProtKB"/>
</dbReference>
<dbReference type="InterPro" id="IPR035952">
    <property type="entry name" value="Rhomboid-like_sf"/>
</dbReference>
<dbReference type="InterPro" id="IPR013861">
    <property type="entry name" value="TMEM115/Pdh1/Rbl19"/>
</dbReference>
<dbReference type="PANTHER" id="PTHR13377">
    <property type="entry name" value="PLACENTAL PROTEIN 6"/>
    <property type="match status" value="1"/>
</dbReference>
<dbReference type="PANTHER" id="PTHR13377:SF3">
    <property type="entry name" value="TRANSMEMBRANE PROTEIN 115"/>
    <property type="match status" value="1"/>
</dbReference>
<dbReference type="Pfam" id="PF08551">
    <property type="entry name" value="DUF1751"/>
    <property type="match status" value="1"/>
</dbReference>
<dbReference type="SMART" id="SM01160">
    <property type="entry name" value="DUF1751"/>
    <property type="match status" value="1"/>
</dbReference>
<dbReference type="SUPFAM" id="SSF144091">
    <property type="entry name" value="Rhomboid-like"/>
    <property type="match status" value="1"/>
</dbReference>
<accession>Q12893</accession>
<accession>A2IDB7</accession>
<accession>O14568</accession>
<accession>Q6IAY4</accession>
<accession>Q9UIX3</accession>
<organism>
    <name type="scientific">Homo sapiens</name>
    <name type="common">Human</name>
    <dbReference type="NCBI Taxonomy" id="9606"/>
    <lineage>
        <taxon>Eukaryota</taxon>
        <taxon>Metazoa</taxon>
        <taxon>Chordata</taxon>
        <taxon>Craniata</taxon>
        <taxon>Vertebrata</taxon>
        <taxon>Euteleostomi</taxon>
        <taxon>Mammalia</taxon>
        <taxon>Eutheria</taxon>
        <taxon>Euarchontoglires</taxon>
        <taxon>Primates</taxon>
        <taxon>Haplorrhini</taxon>
        <taxon>Catarrhini</taxon>
        <taxon>Hominidae</taxon>
        <taxon>Homo</taxon>
    </lineage>
</organism>
<reference key="1">
    <citation type="journal article" date="2000" name="Cancer Res.">
        <title>The 630-kb lung cancer homozygous deletion region on human chromosome 3p21.3: identification and evaluation of the resident candidate tumor suppressor genes.</title>
        <authorList>
            <consortium name="The international lung cancer chromosome 3p21.3 tumor suppressor gene consortium"/>
            <person name="Lerman M.I."/>
            <person name="Minna J.D."/>
        </authorList>
    </citation>
    <scope>NUCLEOTIDE SEQUENCE [MRNA]</scope>
    <scope>TISSUE SPECIFICITY</scope>
    <source>
        <tissue>Placenta</tissue>
    </source>
</reference>
<reference key="2">
    <citation type="submission" date="2004-06" db="EMBL/GenBank/DDBJ databases">
        <title>Cloning of human full open reading frames in Gateway(TM) system entry vector (pDONR201).</title>
        <authorList>
            <person name="Ebert L."/>
            <person name="Schick M."/>
            <person name="Neubert P."/>
            <person name="Schatten R."/>
            <person name="Henze S."/>
            <person name="Korn B."/>
        </authorList>
    </citation>
    <scope>NUCLEOTIDE SEQUENCE [LARGE SCALE MRNA]</scope>
</reference>
<reference key="3">
    <citation type="journal article" date="2006" name="Nature">
        <title>The DNA sequence, annotation and analysis of human chromosome 3.</title>
        <authorList>
            <person name="Muzny D.M."/>
            <person name="Scherer S.E."/>
            <person name="Kaul R."/>
            <person name="Wang J."/>
            <person name="Yu J."/>
            <person name="Sudbrak R."/>
            <person name="Buhay C.J."/>
            <person name="Chen R."/>
            <person name="Cree A."/>
            <person name="Ding Y."/>
            <person name="Dugan-Rocha S."/>
            <person name="Gill R."/>
            <person name="Gunaratne P."/>
            <person name="Harris R.A."/>
            <person name="Hawes A.C."/>
            <person name="Hernandez J."/>
            <person name="Hodgson A.V."/>
            <person name="Hume J."/>
            <person name="Jackson A."/>
            <person name="Khan Z.M."/>
            <person name="Kovar-Smith C."/>
            <person name="Lewis L.R."/>
            <person name="Lozado R.J."/>
            <person name="Metzker M.L."/>
            <person name="Milosavljevic A."/>
            <person name="Miner G.R."/>
            <person name="Morgan M.B."/>
            <person name="Nazareth L.V."/>
            <person name="Scott G."/>
            <person name="Sodergren E."/>
            <person name="Song X.-Z."/>
            <person name="Steffen D."/>
            <person name="Wei S."/>
            <person name="Wheeler D.A."/>
            <person name="Wright M.W."/>
            <person name="Worley K.C."/>
            <person name="Yuan Y."/>
            <person name="Zhang Z."/>
            <person name="Adams C.Q."/>
            <person name="Ansari-Lari M.A."/>
            <person name="Ayele M."/>
            <person name="Brown M.J."/>
            <person name="Chen G."/>
            <person name="Chen Z."/>
            <person name="Clendenning J."/>
            <person name="Clerc-Blankenburg K.P."/>
            <person name="Chen R."/>
            <person name="Chen Z."/>
            <person name="Davis C."/>
            <person name="Delgado O."/>
            <person name="Dinh H.H."/>
            <person name="Dong W."/>
            <person name="Draper H."/>
            <person name="Ernst S."/>
            <person name="Fu G."/>
            <person name="Gonzalez-Garay M.L."/>
            <person name="Garcia D.K."/>
            <person name="Gillett W."/>
            <person name="Gu J."/>
            <person name="Hao B."/>
            <person name="Haugen E."/>
            <person name="Havlak P."/>
            <person name="He X."/>
            <person name="Hennig S."/>
            <person name="Hu S."/>
            <person name="Huang W."/>
            <person name="Jackson L.R."/>
            <person name="Jacob L.S."/>
            <person name="Kelly S.H."/>
            <person name="Kube M."/>
            <person name="Levy R."/>
            <person name="Li Z."/>
            <person name="Liu B."/>
            <person name="Liu J."/>
            <person name="Liu W."/>
            <person name="Lu J."/>
            <person name="Maheshwari M."/>
            <person name="Nguyen B.-V."/>
            <person name="Okwuonu G.O."/>
            <person name="Palmeiri A."/>
            <person name="Pasternak S."/>
            <person name="Perez L.M."/>
            <person name="Phelps K.A."/>
            <person name="Plopper F.J."/>
            <person name="Qiang B."/>
            <person name="Raymond C."/>
            <person name="Rodriguez R."/>
            <person name="Saenphimmachak C."/>
            <person name="Santibanez J."/>
            <person name="Shen H."/>
            <person name="Shen Y."/>
            <person name="Subramanian S."/>
            <person name="Tabor P.E."/>
            <person name="Verduzco D."/>
            <person name="Waldron L."/>
            <person name="Wang J."/>
            <person name="Wang J."/>
            <person name="Wang Q."/>
            <person name="Williams G.A."/>
            <person name="Wong G.K.-S."/>
            <person name="Yao Z."/>
            <person name="Zhang J."/>
            <person name="Zhang X."/>
            <person name="Zhao G."/>
            <person name="Zhou J."/>
            <person name="Zhou Y."/>
            <person name="Nelson D."/>
            <person name="Lehrach H."/>
            <person name="Reinhardt R."/>
            <person name="Naylor S.L."/>
            <person name="Yang H."/>
            <person name="Olson M."/>
            <person name="Weinstock G."/>
            <person name="Gibbs R.A."/>
        </authorList>
    </citation>
    <scope>NUCLEOTIDE SEQUENCE [LARGE SCALE GENOMIC DNA]</scope>
</reference>
<reference key="4">
    <citation type="submission" date="2005-07" db="EMBL/GenBank/DDBJ databases">
        <authorList>
            <person name="Mural R.J."/>
            <person name="Istrail S."/>
            <person name="Sutton G.G."/>
            <person name="Florea L."/>
            <person name="Halpern A.L."/>
            <person name="Mobarry C.M."/>
            <person name="Lippert R."/>
            <person name="Walenz B."/>
            <person name="Shatkay H."/>
            <person name="Dew I."/>
            <person name="Miller J.R."/>
            <person name="Flanigan M.J."/>
            <person name="Edwards N.J."/>
            <person name="Bolanos R."/>
            <person name="Fasulo D."/>
            <person name="Halldorsson B.V."/>
            <person name="Hannenhalli S."/>
            <person name="Turner R."/>
            <person name="Yooseph S."/>
            <person name="Lu F."/>
            <person name="Nusskern D.R."/>
            <person name="Shue B.C."/>
            <person name="Zheng X.H."/>
            <person name="Zhong F."/>
            <person name="Delcher A.L."/>
            <person name="Huson D.H."/>
            <person name="Kravitz S.A."/>
            <person name="Mouchard L."/>
            <person name="Reinert K."/>
            <person name="Remington K.A."/>
            <person name="Clark A.G."/>
            <person name="Waterman M.S."/>
            <person name="Eichler E.E."/>
            <person name="Adams M.D."/>
            <person name="Hunkapiller M.W."/>
            <person name="Myers E.W."/>
            <person name="Venter J.C."/>
        </authorList>
    </citation>
    <scope>NUCLEOTIDE SEQUENCE [LARGE SCALE GENOMIC DNA]</scope>
</reference>
<reference key="5">
    <citation type="journal article" date="2004" name="Genome Res.">
        <title>The status, quality, and expansion of the NIH full-length cDNA project: the Mammalian Gene Collection (MGC).</title>
        <authorList>
            <consortium name="The MGC Project Team"/>
        </authorList>
    </citation>
    <scope>NUCLEOTIDE SEQUENCE [LARGE SCALE MRNA]</scope>
    <source>
        <tissue>Brain</tissue>
        <tissue>Muscle</tissue>
    </source>
</reference>
<reference key="6">
    <citation type="journal article" date="2008" name="J. Pathol.">
        <title>Loss of PL6 protein expression in renal clear cell carcinomas and other VHL-deficient tumours.</title>
        <authorList>
            <person name="Ivanova A.V."/>
            <person name="Vortmeyer A."/>
            <person name="Ivanov S.V."/>
            <person name="Nickerson M.L."/>
            <person name="Maher E.R."/>
            <person name="Lerman M.I."/>
        </authorList>
    </citation>
    <scope>SUBCELLULAR LOCATION</scope>
    <scope>TISSUE SPECIFICITY</scope>
</reference>
<reference key="7">
    <citation type="journal article" date="2009" name="Anal. Chem.">
        <title>Lys-N and trypsin cover complementary parts of the phosphoproteome in a refined SCX-based approach.</title>
        <authorList>
            <person name="Gauci S."/>
            <person name="Helbig A.O."/>
            <person name="Slijper M."/>
            <person name="Krijgsveld J."/>
            <person name="Heck A.J."/>
            <person name="Mohammed S."/>
        </authorList>
    </citation>
    <scope>IDENTIFICATION BY MASS SPECTROMETRY [LARGE SCALE ANALYSIS]</scope>
</reference>
<reference key="8">
    <citation type="journal article" date="2013" name="J. Proteome Res.">
        <title>Toward a comprehensive characterization of a human cancer cell phosphoproteome.</title>
        <authorList>
            <person name="Zhou H."/>
            <person name="Di Palma S."/>
            <person name="Preisinger C."/>
            <person name="Peng M."/>
            <person name="Polat A.N."/>
            <person name="Heck A.J."/>
            <person name="Mohammed S."/>
        </authorList>
    </citation>
    <scope>PHOSPHORYLATION [LARGE SCALE ANALYSIS] AT THR-329</scope>
    <scope>IDENTIFICATION BY MASS SPECTROMETRY [LARGE SCALE ANALYSIS]</scope>
    <source>
        <tissue>Cervix carcinoma</tissue>
        <tissue>Erythroleukemia</tissue>
    </source>
</reference>
<reference key="9">
    <citation type="journal article" date="2014" name="J. Cell Sci.">
        <title>TMEM115 is an integral membrane protein of the Golgi complex involved in retrograde transport.</title>
        <authorList>
            <person name="Ong Y.S."/>
            <person name="Tran T.H."/>
            <person name="Gounko N.V."/>
            <person name="Hong W."/>
        </authorList>
    </citation>
    <scope>FUNCTION</scope>
    <scope>SUBCELLULAR LOCATION</scope>
    <scope>INTERACTION WITH COPB1; LMAN1; COG3</scope>
    <scope>HOMOOLIGOMERIZATION</scope>
    <scope>REGION</scope>
    <scope>TOPOLOGY</scope>
</reference>
<reference key="10">
    <citation type="journal article" date="2014" name="J. Proteomics">
        <title>An enzyme assisted RP-RPLC approach for in-depth analysis of human liver phosphoproteome.</title>
        <authorList>
            <person name="Bian Y."/>
            <person name="Song C."/>
            <person name="Cheng K."/>
            <person name="Dong M."/>
            <person name="Wang F."/>
            <person name="Huang J."/>
            <person name="Sun D."/>
            <person name="Wang L."/>
            <person name="Ye M."/>
            <person name="Zou H."/>
        </authorList>
    </citation>
    <scope>PHOSPHORYLATION [LARGE SCALE ANALYSIS] AT THR-329</scope>
    <scope>IDENTIFICATION BY MASS SPECTROMETRY [LARGE SCALE ANALYSIS]</scope>
    <source>
        <tissue>Liver</tissue>
    </source>
</reference>
<protein>
    <recommendedName>
        <fullName evidence="7">Transmembrane protein 115</fullName>
    </recommendedName>
    <alternativeName>
        <fullName evidence="7">Placental protein 6</fullName>
    </alternativeName>
    <alternativeName>
        <fullName evidence="7">Protein PL6</fullName>
    </alternativeName>
</protein>
<proteinExistence type="evidence at protein level"/>
<evidence type="ECO:0000255" key="1"/>
<evidence type="ECO:0000256" key="2">
    <source>
        <dbReference type="SAM" id="MobiDB-lite"/>
    </source>
</evidence>
<evidence type="ECO:0000269" key="3">
    <source>
    </source>
</evidence>
<evidence type="ECO:0000269" key="4">
    <source>
    </source>
</evidence>
<evidence type="ECO:0000269" key="5">
    <source>
    </source>
</evidence>
<evidence type="ECO:0000303" key="6">
    <source>
    </source>
</evidence>
<evidence type="ECO:0000305" key="7"/>
<evidence type="ECO:0000312" key="8">
    <source>
        <dbReference type="EMBL" id="AAA92281.1"/>
    </source>
</evidence>
<evidence type="ECO:0000312" key="9">
    <source>
        <dbReference type="HGNC" id="HGNC:30055"/>
    </source>
</evidence>
<evidence type="ECO:0007744" key="10">
    <source>
    </source>
</evidence>
<evidence type="ECO:0007744" key="11">
    <source>
    </source>
</evidence>
<sequence>MQRALPGARQHLGAILASASVVVKALCAAVLFLYLLSFAVDTGCLAVTPGYLFPPNFWIWTLATHGLMEQHVWDVAISLTTVVVAGRLLEPLWGALELLIFFSVVNVSVGLLGAFAYLLTYMASFNLVYLFTVRIHGALGFLGGVLVALKQTMGDCVVLRVPQVRVSVMPMLLLALLLLLRLATLLQSPALASYGFGLLSSWVYLRFYQRHSRGRGDMADHFAFATFFPEILQPVVGLLANLVHSLLVKVKICQKTVKRYDVGAPSSITISLPGTDPQDAERRRQLALKALNERLKRVEDQSIWPSMDDDEEESGAKVDSPLPSDKAPTPPGKGAAPESSLITFEAAPPTL</sequence>
<comment type="function">
    <text evidence="5">May play a role in retrograde transport of proteins from the Golgi to the endoplasmic reticulum. May indirectly play a role in protein glycosylation in the Golgi.</text>
</comment>
<comment type="subunit">
    <text evidence="5">Homooligomer (PubMed:24806965). Interacts with COPB1 (PubMed:24806965). May interact with LMAN1 (PubMed:24806965). Interacts with the COG complex; probably through COG3 (PubMed:24806965).</text>
</comment>
<comment type="interaction">
    <interactant intactId="EBI-8633987">
        <id>Q12893</id>
    </interactant>
    <interactant intactId="EBI-13059134">
        <id>Q13520</id>
        <label>AQP6</label>
    </interactant>
    <organismsDiffer>false</organismsDiffer>
    <experiments>3</experiments>
</comment>
<comment type="interaction">
    <interactant intactId="EBI-8633987">
        <id>Q12893</id>
    </interactant>
    <interactant intactId="EBI-19946665">
        <id>Q86U10</id>
        <label>ASPG</label>
    </interactant>
    <organismsDiffer>false</organismsDiffer>
    <experiments>3</experiments>
</comment>
<comment type="interaction">
    <interactant intactId="EBI-8633987">
        <id>Q12893</id>
    </interactant>
    <interactant intactId="EBI-1046040">
        <id>P00387</id>
        <label>CYB5R3</label>
    </interactant>
    <organismsDiffer>false</organismsDiffer>
    <experiments>3</experiments>
</comment>
<comment type="interaction">
    <interactant intactId="EBI-8633987">
        <id>Q12893</id>
    </interactant>
    <interactant intactId="EBI-12937691">
        <id>Q9BUP3-3</id>
        <label>HTATIP2</label>
    </interactant>
    <organismsDiffer>false</organismsDiffer>
    <experiments>3</experiments>
</comment>
<comment type="interaction">
    <interactant intactId="EBI-8633987">
        <id>Q12893</id>
    </interactant>
    <interactant intactId="EBI-466029">
        <id>P42858</id>
        <label>HTT</label>
    </interactant>
    <organismsDiffer>false</organismsDiffer>
    <experiments>3</experiments>
</comment>
<comment type="interaction">
    <interactant intactId="EBI-8633987">
        <id>Q12893</id>
    </interactant>
    <interactant intactId="EBI-21591415">
        <id>P13473-2</id>
        <label>LAMP2</label>
    </interactant>
    <organismsDiffer>false</organismsDiffer>
    <experiments>3</experiments>
</comment>
<comment type="interaction">
    <interactant intactId="EBI-8633987">
        <id>Q12893</id>
    </interactant>
    <interactant intactId="EBI-3867271">
        <id>Q9NQG1</id>
        <label>MANBAL</label>
    </interactant>
    <organismsDiffer>false</organismsDiffer>
    <experiments>3</experiments>
</comment>
<comment type="interaction">
    <interactant intactId="EBI-8633987">
        <id>Q12893</id>
    </interactant>
    <interactant intactId="EBI-712367">
        <id>Q9UI14</id>
        <label>RABAC1</label>
    </interactant>
    <organismsDiffer>false</organismsDiffer>
    <experiments>3</experiments>
</comment>
<comment type="interaction">
    <interactant intactId="EBI-8633987">
        <id>Q12893</id>
    </interactant>
    <interactant intactId="EBI-2623095">
        <id>Q9Y371</id>
        <label>SH3GLB1</label>
    </interactant>
    <organismsDiffer>false</organismsDiffer>
    <experiments>3</experiments>
</comment>
<comment type="interaction">
    <interactant intactId="EBI-8633987">
        <id>Q12893</id>
    </interactant>
    <interactant intactId="EBI-7131783">
        <id>Q8N205</id>
        <label>SYNE4</label>
    </interactant>
    <organismsDiffer>false</organismsDiffer>
    <experiments>3</experiments>
</comment>
<comment type="interaction">
    <interactant intactId="EBI-8633987">
        <id>Q12893</id>
    </interactant>
    <interactant intactId="EBI-12947623">
        <id>Q96MV1</id>
        <label>TLCD4</label>
    </interactant>
    <organismsDiffer>false</organismsDiffer>
    <experiments>3</experiments>
</comment>
<comment type="interaction">
    <interactant intactId="EBI-8633987">
        <id>Q12893</id>
    </interactant>
    <interactant intactId="EBI-11603430">
        <id>Q6PL24</id>
        <label>TMED8</label>
    </interactant>
    <organismsDiffer>false</organismsDiffer>
    <experiments>3</experiments>
</comment>
<comment type="interaction">
    <interactant intactId="EBI-8633987">
        <id>Q12893</id>
    </interactant>
    <interactant intactId="EBI-6447886">
        <id>Q9Y320</id>
        <label>TMX2</label>
    </interactant>
    <organismsDiffer>false</organismsDiffer>
    <experiments>3</experiments>
</comment>
<comment type="subcellular location">
    <subcellularLocation>
        <location evidence="4 5">Golgi apparatus</location>
        <location evidence="4 5">Golgi stack membrane</location>
        <topology evidence="6">Multi-pass membrane protein</topology>
    </subcellularLocation>
</comment>
<comment type="tissue specificity">
    <text evidence="3 4">Expressed strongly in kidney and skeletal muscle, followed by liver, placenta, pancreas, and lung, with low amounts in heart and only traces in brain (PubMed:11085536). Widely expressed with ubiquitous expression in epithelial tissues (at protein level) (PubMed:17973242).</text>
</comment>
<comment type="similarity">
    <text evidence="7">Belongs to the TMEM115 family.</text>
</comment>
<comment type="sequence caution" evidence="7">
    <conflict type="erroneous gene model prediction">
        <sequence resource="EMBL-CDS" id="AAB67308"/>
    </conflict>
</comment>
<feature type="chain" id="PRO_0000058451" description="Transmembrane protein 115">
    <location>
        <begin position="1"/>
        <end position="351"/>
    </location>
</feature>
<feature type="topological domain" description="Cytoplasmic" evidence="7">
    <location>
        <begin position="1"/>
        <end position="19"/>
    </location>
</feature>
<feature type="transmembrane region" description="Helical; Name=1" evidence="1">
    <location>
        <begin position="20"/>
        <end position="40"/>
    </location>
</feature>
<feature type="topological domain" description="Lumenal" evidence="7">
    <location>
        <begin position="41"/>
        <end position="97"/>
    </location>
</feature>
<feature type="transmembrane region" description="Helical; Name=2" evidence="1">
    <location>
        <begin position="98"/>
        <end position="118"/>
    </location>
</feature>
<feature type="topological domain" description="Cytoplasmic" evidence="7">
    <location>
        <begin position="119"/>
        <end position="126"/>
    </location>
</feature>
<feature type="transmembrane region" description="Helical; Name=3" evidence="1">
    <location>
        <begin position="127"/>
        <end position="147"/>
    </location>
</feature>
<feature type="topological domain" description="Lumenal" evidence="7">
    <location>
        <begin position="148"/>
        <end position="165"/>
    </location>
</feature>
<feature type="transmembrane region" description="Helical; Name=4" evidence="1">
    <location>
        <begin position="166"/>
        <end position="186"/>
    </location>
</feature>
<feature type="topological domain" description="Cytoplasmic" evidence="5">
    <location>
        <begin position="187"/>
        <end position="351"/>
    </location>
</feature>
<feature type="region of interest" description="Mediates homooligomerization" evidence="5">
    <location>
        <begin position="1"/>
        <end position="205"/>
    </location>
</feature>
<feature type="region of interest" description="Mediates localization to the Golgi" evidence="5">
    <location>
        <begin position="206"/>
        <end position="229"/>
    </location>
</feature>
<feature type="region of interest" description="Disordered" evidence="2">
    <location>
        <begin position="301"/>
        <end position="351"/>
    </location>
</feature>
<feature type="modified residue" description="Phosphothreonine" evidence="10 11">
    <location>
        <position position="329"/>
    </location>
</feature>
<gene>
    <name evidence="9" type="primary">TMEM115</name>
    <name evidence="8" type="synonym">PL6</name>
    <name type="ORF">LUCA11.2</name>
</gene>
<name>TM115_HUMAN</name>
<keyword id="KW-0333">Golgi apparatus</keyword>
<keyword id="KW-0472">Membrane</keyword>
<keyword id="KW-0597">Phosphoprotein</keyword>
<keyword id="KW-0653">Protein transport</keyword>
<keyword id="KW-1267">Proteomics identification</keyword>
<keyword id="KW-1185">Reference proteome</keyword>
<keyword id="KW-0812">Transmembrane</keyword>
<keyword id="KW-1133">Transmembrane helix</keyword>
<keyword id="KW-0813">Transport</keyword>